<comment type="function">
    <text evidence="1">Catalyzes the reversible cyclization of carbamoyl aspartate to dihydroorotate.</text>
</comment>
<comment type="catalytic activity">
    <reaction evidence="1">
        <text>(S)-dihydroorotate + H2O = N-carbamoyl-L-aspartate + H(+)</text>
        <dbReference type="Rhea" id="RHEA:24296"/>
        <dbReference type="ChEBI" id="CHEBI:15377"/>
        <dbReference type="ChEBI" id="CHEBI:15378"/>
        <dbReference type="ChEBI" id="CHEBI:30864"/>
        <dbReference type="ChEBI" id="CHEBI:32814"/>
        <dbReference type="EC" id="3.5.2.3"/>
    </reaction>
</comment>
<comment type="cofactor">
    <cofactor evidence="1">
        <name>Zn(2+)</name>
        <dbReference type="ChEBI" id="CHEBI:29105"/>
    </cofactor>
    <text evidence="1">Binds 2 Zn(2+) ions per subunit.</text>
</comment>
<comment type="pathway">
    <text evidence="1">Pyrimidine metabolism; UMP biosynthesis via de novo pathway; (S)-dihydroorotate from bicarbonate: step 3/3.</text>
</comment>
<comment type="subunit">
    <text evidence="1">Homodimer.</text>
</comment>
<comment type="similarity">
    <text evidence="1">Belongs to the metallo-dependent hydrolases superfamily. DHOase family. Class II DHOase subfamily.</text>
</comment>
<keyword id="KW-0378">Hydrolase</keyword>
<keyword id="KW-0479">Metal-binding</keyword>
<keyword id="KW-0665">Pyrimidine biosynthesis</keyword>
<keyword id="KW-1185">Reference proteome</keyword>
<keyword id="KW-0862">Zinc</keyword>
<sequence length="348" mass="38813">MTAPSQVLKIRRPDDWHLHLRDGDMLKTVVPYTSEIYGRAIVMPNLAPPVTTVEAAVAYRQRILDAVPAGHDFTPLMTCYLTDSLDPNELERGFNEGVFTAAKLYPANATTNSSHGVTSVDAIMPVLERMEKIGMPLLVHGEVTHADIDIFDREARFIESVMEPLRQRLTALKVVFEHITTKDAADYVRDGNERLAATITPQHLMFNRNHMLVGGVRPHLYCLPILKRNIHQQALRELVASGFNRVFLGTDSAPHARHRKESSCGCAGCFNAPTALGSYATVFEEMNALQHFEAFCSVNGPQFYGLPVNDTFIELVREEQQVAESIALTDDTLVPFLAGETVRWSVKQ</sequence>
<evidence type="ECO:0000255" key="1">
    <source>
        <dbReference type="HAMAP-Rule" id="MF_00219"/>
    </source>
</evidence>
<proteinExistence type="inferred from homology"/>
<dbReference type="EC" id="3.5.2.3" evidence="1"/>
<dbReference type="EMBL" id="FM180568">
    <property type="protein sequence ID" value="CAS08700.1"/>
    <property type="molecule type" value="Genomic_DNA"/>
</dbReference>
<dbReference type="RefSeq" id="WP_000126543.1">
    <property type="nucleotide sequence ID" value="NC_011601.1"/>
</dbReference>
<dbReference type="SMR" id="B7UP76"/>
<dbReference type="MEROPS" id="M38.A02"/>
<dbReference type="KEGG" id="ecg:E2348C_1152"/>
<dbReference type="HOGENOM" id="CLU_041558_1_0_6"/>
<dbReference type="UniPathway" id="UPA00070">
    <property type="reaction ID" value="UER00117"/>
</dbReference>
<dbReference type="Proteomes" id="UP000008205">
    <property type="component" value="Chromosome"/>
</dbReference>
<dbReference type="GO" id="GO:0005829">
    <property type="term" value="C:cytosol"/>
    <property type="evidence" value="ECO:0007669"/>
    <property type="project" value="TreeGrafter"/>
</dbReference>
<dbReference type="GO" id="GO:0004151">
    <property type="term" value="F:dihydroorotase activity"/>
    <property type="evidence" value="ECO:0007669"/>
    <property type="project" value="UniProtKB-UniRule"/>
</dbReference>
<dbReference type="GO" id="GO:0008270">
    <property type="term" value="F:zinc ion binding"/>
    <property type="evidence" value="ECO:0007669"/>
    <property type="project" value="UniProtKB-UniRule"/>
</dbReference>
<dbReference type="GO" id="GO:0006207">
    <property type="term" value="P:'de novo' pyrimidine nucleobase biosynthetic process"/>
    <property type="evidence" value="ECO:0007669"/>
    <property type="project" value="TreeGrafter"/>
</dbReference>
<dbReference type="GO" id="GO:0044205">
    <property type="term" value="P:'de novo' UMP biosynthetic process"/>
    <property type="evidence" value="ECO:0007669"/>
    <property type="project" value="UniProtKB-UniRule"/>
</dbReference>
<dbReference type="CDD" id="cd01294">
    <property type="entry name" value="DHOase"/>
    <property type="match status" value="1"/>
</dbReference>
<dbReference type="FunFam" id="3.20.20.140:FF:000006">
    <property type="entry name" value="Dihydroorotase"/>
    <property type="match status" value="1"/>
</dbReference>
<dbReference type="Gene3D" id="3.20.20.140">
    <property type="entry name" value="Metal-dependent hydrolases"/>
    <property type="match status" value="1"/>
</dbReference>
<dbReference type="HAMAP" id="MF_00219">
    <property type="entry name" value="PyrC_classII"/>
    <property type="match status" value="1"/>
</dbReference>
<dbReference type="InterPro" id="IPR006680">
    <property type="entry name" value="Amidohydro-rel"/>
</dbReference>
<dbReference type="InterPro" id="IPR004721">
    <property type="entry name" value="DHOdimr"/>
</dbReference>
<dbReference type="InterPro" id="IPR002195">
    <property type="entry name" value="Dihydroorotase_CS"/>
</dbReference>
<dbReference type="InterPro" id="IPR032466">
    <property type="entry name" value="Metal_Hydrolase"/>
</dbReference>
<dbReference type="NCBIfam" id="TIGR00856">
    <property type="entry name" value="pyrC_dimer"/>
    <property type="match status" value="1"/>
</dbReference>
<dbReference type="PANTHER" id="PTHR43137">
    <property type="entry name" value="DIHYDROOROTASE"/>
    <property type="match status" value="1"/>
</dbReference>
<dbReference type="PANTHER" id="PTHR43137:SF1">
    <property type="entry name" value="DIHYDROOROTASE"/>
    <property type="match status" value="1"/>
</dbReference>
<dbReference type="Pfam" id="PF01979">
    <property type="entry name" value="Amidohydro_1"/>
    <property type="match status" value="1"/>
</dbReference>
<dbReference type="PIRSF" id="PIRSF001237">
    <property type="entry name" value="DHOdimr"/>
    <property type="match status" value="1"/>
</dbReference>
<dbReference type="SUPFAM" id="SSF51556">
    <property type="entry name" value="Metallo-dependent hydrolases"/>
    <property type="match status" value="1"/>
</dbReference>
<dbReference type="PROSITE" id="PS00482">
    <property type="entry name" value="DIHYDROOROTASE_1"/>
    <property type="match status" value="1"/>
</dbReference>
<dbReference type="PROSITE" id="PS00483">
    <property type="entry name" value="DIHYDROOROTASE_2"/>
    <property type="match status" value="1"/>
</dbReference>
<reference key="1">
    <citation type="journal article" date="2009" name="J. Bacteriol.">
        <title>Complete genome sequence and comparative genome analysis of enteropathogenic Escherichia coli O127:H6 strain E2348/69.</title>
        <authorList>
            <person name="Iguchi A."/>
            <person name="Thomson N.R."/>
            <person name="Ogura Y."/>
            <person name="Saunders D."/>
            <person name="Ooka T."/>
            <person name="Henderson I.R."/>
            <person name="Harris D."/>
            <person name="Asadulghani M."/>
            <person name="Kurokawa K."/>
            <person name="Dean P."/>
            <person name="Kenny B."/>
            <person name="Quail M.A."/>
            <person name="Thurston S."/>
            <person name="Dougan G."/>
            <person name="Hayashi T."/>
            <person name="Parkhill J."/>
            <person name="Frankel G."/>
        </authorList>
    </citation>
    <scope>NUCLEOTIDE SEQUENCE [LARGE SCALE GENOMIC DNA]</scope>
    <source>
        <strain>E2348/69 / EPEC</strain>
    </source>
</reference>
<feature type="chain" id="PRO_1000193071" description="Dihydroorotase">
    <location>
        <begin position="1"/>
        <end position="348"/>
    </location>
</feature>
<feature type="active site" evidence="1">
    <location>
        <position position="251"/>
    </location>
</feature>
<feature type="binding site" evidence="1">
    <location>
        <position position="17"/>
    </location>
    <ligand>
        <name>Zn(2+)</name>
        <dbReference type="ChEBI" id="CHEBI:29105"/>
        <label>1</label>
    </ligand>
</feature>
<feature type="binding site" evidence="1">
    <location>
        <begin position="19"/>
        <end position="21"/>
    </location>
    <ligand>
        <name>substrate</name>
    </ligand>
</feature>
<feature type="binding site" evidence="1">
    <location>
        <position position="19"/>
    </location>
    <ligand>
        <name>Zn(2+)</name>
        <dbReference type="ChEBI" id="CHEBI:29105"/>
        <label>1</label>
    </ligand>
</feature>
<feature type="binding site" evidence="1">
    <location>
        <position position="45"/>
    </location>
    <ligand>
        <name>substrate</name>
    </ligand>
</feature>
<feature type="binding site" description="via carbamate group" evidence="1">
    <location>
        <position position="103"/>
    </location>
    <ligand>
        <name>Zn(2+)</name>
        <dbReference type="ChEBI" id="CHEBI:29105"/>
        <label>1</label>
    </ligand>
</feature>
<feature type="binding site" description="via carbamate group" evidence="1">
    <location>
        <position position="103"/>
    </location>
    <ligand>
        <name>Zn(2+)</name>
        <dbReference type="ChEBI" id="CHEBI:29105"/>
        <label>2</label>
    </ligand>
</feature>
<feature type="binding site" evidence="1">
    <location>
        <position position="140"/>
    </location>
    <ligand>
        <name>substrate</name>
    </ligand>
</feature>
<feature type="binding site" evidence="1">
    <location>
        <position position="140"/>
    </location>
    <ligand>
        <name>Zn(2+)</name>
        <dbReference type="ChEBI" id="CHEBI:29105"/>
        <label>2</label>
    </ligand>
</feature>
<feature type="binding site" evidence="1">
    <location>
        <position position="178"/>
    </location>
    <ligand>
        <name>Zn(2+)</name>
        <dbReference type="ChEBI" id="CHEBI:29105"/>
        <label>2</label>
    </ligand>
</feature>
<feature type="binding site" evidence="1">
    <location>
        <position position="223"/>
    </location>
    <ligand>
        <name>substrate</name>
    </ligand>
</feature>
<feature type="binding site" evidence="1">
    <location>
        <position position="251"/>
    </location>
    <ligand>
        <name>Zn(2+)</name>
        <dbReference type="ChEBI" id="CHEBI:29105"/>
        <label>1</label>
    </ligand>
</feature>
<feature type="binding site" evidence="1">
    <location>
        <position position="255"/>
    </location>
    <ligand>
        <name>substrate</name>
    </ligand>
</feature>
<feature type="binding site" evidence="1">
    <location>
        <position position="267"/>
    </location>
    <ligand>
        <name>substrate</name>
    </ligand>
</feature>
<feature type="modified residue" description="N6-carboxylysine" evidence="1">
    <location>
        <position position="103"/>
    </location>
</feature>
<protein>
    <recommendedName>
        <fullName evidence="1">Dihydroorotase</fullName>
        <shortName evidence="1">DHOase</shortName>
        <ecNumber evidence="1">3.5.2.3</ecNumber>
    </recommendedName>
</protein>
<organism>
    <name type="scientific">Escherichia coli O127:H6 (strain E2348/69 / EPEC)</name>
    <dbReference type="NCBI Taxonomy" id="574521"/>
    <lineage>
        <taxon>Bacteria</taxon>
        <taxon>Pseudomonadati</taxon>
        <taxon>Pseudomonadota</taxon>
        <taxon>Gammaproteobacteria</taxon>
        <taxon>Enterobacterales</taxon>
        <taxon>Enterobacteriaceae</taxon>
        <taxon>Escherichia</taxon>
    </lineage>
</organism>
<accession>B7UP76</accession>
<gene>
    <name evidence="1" type="primary">pyrC</name>
    <name type="ordered locus">E2348C_1152</name>
</gene>
<name>PYRC_ECO27</name>